<comment type="function">
    <text evidence="1">Protein S19 forms a complex with S13 that binds strongly to the 16S ribosomal RNA.</text>
</comment>
<comment type="similarity">
    <text evidence="1">Belongs to the universal ribosomal protein uS19 family.</text>
</comment>
<keyword id="KW-0687">Ribonucleoprotein</keyword>
<keyword id="KW-0689">Ribosomal protein</keyword>
<keyword id="KW-0694">RNA-binding</keyword>
<keyword id="KW-0699">rRNA-binding</keyword>
<feature type="chain" id="PRO_1000211818" description="Small ribosomal subunit protein uS19">
    <location>
        <begin position="1"/>
        <end position="92"/>
    </location>
</feature>
<sequence>MARSIWKGPFVDGYLIKKVQKLMESGKSEMIKTWSRRSTILPIFVGFTFSVHNGNKFIPVSVNEEMVGRKLGEFAPTRTFHGHGADKKIKRK</sequence>
<gene>
    <name evidence="1" type="primary">rpsS</name>
    <name type="ordered locus">RPR_06210</name>
</gene>
<evidence type="ECO:0000255" key="1">
    <source>
        <dbReference type="HAMAP-Rule" id="MF_00531"/>
    </source>
</evidence>
<evidence type="ECO:0000305" key="2"/>
<proteinExistence type="inferred from homology"/>
<dbReference type="EMBL" id="CP001227">
    <property type="protein sequence ID" value="ACR47772.1"/>
    <property type="molecule type" value="Genomic_DNA"/>
</dbReference>
<dbReference type="RefSeq" id="WP_004997794.1">
    <property type="nucleotide sequence ID" value="NC_012730.1"/>
</dbReference>
<dbReference type="SMR" id="C4K2H5"/>
<dbReference type="GeneID" id="95361482"/>
<dbReference type="KEGG" id="rpk:RPR_06210"/>
<dbReference type="HOGENOM" id="CLU_144911_0_1_5"/>
<dbReference type="Proteomes" id="UP000005015">
    <property type="component" value="Chromosome"/>
</dbReference>
<dbReference type="GO" id="GO:0005737">
    <property type="term" value="C:cytoplasm"/>
    <property type="evidence" value="ECO:0007669"/>
    <property type="project" value="UniProtKB-ARBA"/>
</dbReference>
<dbReference type="GO" id="GO:0015935">
    <property type="term" value="C:small ribosomal subunit"/>
    <property type="evidence" value="ECO:0007669"/>
    <property type="project" value="InterPro"/>
</dbReference>
<dbReference type="GO" id="GO:0019843">
    <property type="term" value="F:rRNA binding"/>
    <property type="evidence" value="ECO:0007669"/>
    <property type="project" value="UniProtKB-UniRule"/>
</dbReference>
<dbReference type="GO" id="GO:0003735">
    <property type="term" value="F:structural constituent of ribosome"/>
    <property type="evidence" value="ECO:0007669"/>
    <property type="project" value="InterPro"/>
</dbReference>
<dbReference type="GO" id="GO:0000028">
    <property type="term" value="P:ribosomal small subunit assembly"/>
    <property type="evidence" value="ECO:0007669"/>
    <property type="project" value="TreeGrafter"/>
</dbReference>
<dbReference type="GO" id="GO:0006412">
    <property type="term" value="P:translation"/>
    <property type="evidence" value="ECO:0007669"/>
    <property type="project" value="UniProtKB-UniRule"/>
</dbReference>
<dbReference type="FunFam" id="3.30.860.10:FF:000001">
    <property type="entry name" value="30S ribosomal protein S19"/>
    <property type="match status" value="1"/>
</dbReference>
<dbReference type="Gene3D" id="3.30.860.10">
    <property type="entry name" value="30s Ribosomal Protein S19, Chain A"/>
    <property type="match status" value="1"/>
</dbReference>
<dbReference type="HAMAP" id="MF_00531">
    <property type="entry name" value="Ribosomal_uS19"/>
    <property type="match status" value="1"/>
</dbReference>
<dbReference type="InterPro" id="IPR002222">
    <property type="entry name" value="Ribosomal_uS19"/>
</dbReference>
<dbReference type="InterPro" id="IPR005732">
    <property type="entry name" value="Ribosomal_uS19_bac-type"/>
</dbReference>
<dbReference type="InterPro" id="IPR020934">
    <property type="entry name" value="Ribosomal_uS19_CS"/>
</dbReference>
<dbReference type="InterPro" id="IPR023575">
    <property type="entry name" value="Ribosomal_uS19_SF"/>
</dbReference>
<dbReference type="NCBIfam" id="TIGR01050">
    <property type="entry name" value="rpsS_bact"/>
    <property type="match status" value="1"/>
</dbReference>
<dbReference type="PANTHER" id="PTHR11880">
    <property type="entry name" value="RIBOSOMAL PROTEIN S19P FAMILY MEMBER"/>
    <property type="match status" value="1"/>
</dbReference>
<dbReference type="PANTHER" id="PTHR11880:SF8">
    <property type="entry name" value="SMALL RIBOSOMAL SUBUNIT PROTEIN US19M"/>
    <property type="match status" value="1"/>
</dbReference>
<dbReference type="Pfam" id="PF00203">
    <property type="entry name" value="Ribosomal_S19"/>
    <property type="match status" value="1"/>
</dbReference>
<dbReference type="PIRSF" id="PIRSF002144">
    <property type="entry name" value="Ribosomal_S19"/>
    <property type="match status" value="1"/>
</dbReference>
<dbReference type="PRINTS" id="PR00975">
    <property type="entry name" value="RIBOSOMALS19"/>
</dbReference>
<dbReference type="SUPFAM" id="SSF54570">
    <property type="entry name" value="Ribosomal protein S19"/>
    <property type="match status" value="1"/>
</dbReference>
<dbReference type="PROSITE" id="PS00323">
    <property type="entry name" value="RIBOSOMAL_S19"/>
    <property type="match status" value="1"/>
</dbReference>
<reference key="1">
    <citation type="journal article" date="2009" name="PLoS ONE">
        <title>Genome sequence of the endosymbiont Rickettsia peacockii and comparison with virulent Rickettsia rickettsii: identification of virulence factors.</title>
        <authorList>
            <person name="Felsheim R.F."/>
            <person name="Kurtti T.J."/>
            <person name="Munderloh U.G."/>
        </authorList>
    </citation>
    <scope>NUCLEOTIDE SEQUENCE [LARGE SCALE GENOMIC DNA]</scope>
    <source>
        <strain>Rustic</strain>
    </source>
</reference>
<protein>
    <recommendedName>
        <fullName evidence="1">Small ribosomal subunit protein uS19</fullName>
    </recommendedName>
    <alternativeName>
        <fullName evidence="2">30S ribosomal protein S19</fullName>
    </alternativeName>
</protein>
<name>RS19_RICPU</name>
<organism>
    <name type="scientific">Rickettsia peacockii (strain Rustic)</name>
    <dbReference type="NCBI Taxonomy" id="562019"/>
    <lineage>
        <taxon>Bacteria</taxon>
        <taxon>Pseudomonadati</taxon>
        <taxon>Pseudomonadota</taxon>
        <taxon>Alphaproteobacteria</taxon>
        <taxon>Rickettsiales</taxon>
        <taxon>Rickettsiaceae</taxon>
        <taxon>Rickettsieae</taxon>
        <taxon>Rickettsia</taxon>
        <taxon>spotted fever group</taxon>
    </lineage>
</organism>
<accession>C4K2H5</accession>